<feature type="chain" id="PRO_1000123256" description="Phosphopantetheine adenylyltransferase">
    <location>
        <begin position="1"/>
        <end position="164"/>
    </location>
</feature>
<feature type="binding site" evidence="1">
    <location>
        <begin position="9"/>
        <end position="10"/>
    </location>
    <ligand>
        <name>ATP</name>
        <dbReference type="ChEBI" id="CHEBI:30616"/>
    </ligand>
</feature>
<feature type="binding site" evidence="1">
    <location>
        <position position="9"/>
    </location>
    <ligand>
        <name>substrate</name>
    </ligand>
</feature>
<feature type="binding site" evidence="1">
    <location>
        <position position="17"/>
    </location>
    <ligand>
        <name>ATP</name>
        <dbReference type="ChEBI" id="CHEBI:30616"/>
    </ligand>
</feature>
<feature type="binding site" evidence="1">
    <location>
        <position position="41"/>
    </location>
    <ligand>
        <name>substrate</name>
    </ligand>
</feature>
<feature type="binding site" evidence="1">
    <location>
        <position position="78"/>
    </location>
    <ligand>
        <name>substrate</name>
    </ligand>
</feature>
<feature type="binding site" evidence="1">
    <location>
        <position position="92"/>
    </location>
    <ligand>
        <name>substrate</name>
    </ligand>
</feature>
<feature type="binding site" evidence="1">
    <location>
        <begin position="93"/>
        <end position="95"/>
    </location>
    <ligand>
        <name>ATP</name>
        <dbReference type="ChEBI" id="CHEBI:30616"/>
    </ligand>
</feature>
<feature type="binding site" evidence="1">
    <location>
        <position position="103"/>
    </location>
    <ligand>
        <name>ATP</name>
        <dbReference type="ChEBI" id="CHEBI:30616"/>
    </ligand>
</feature>
<feature type="binding site" evidence="1">
    <location>
        <begin position="128"/>
        <end position="134"/>
    </location>
    <ligand>
        <name>ATP</name>
        <dbReference type="ChEBI" id="CHEBI:30616"/>
    </ligand>
</feature>
<feature type="site" description="Transition state stabilizer" evidence="1">
    <location>
        <position position="17"/>
    </location>
</feature>
<dbReference type="EC" id="2.7.7.3" evidence="1"/>
<dbReference type="EMBL" id="CP000633">
    <property type="protein sequence ID" value="ACM36745.1"/>
    <property type="molecule type" value="Genomic_DNA"/>
</dbReference>
<dbReference type="RefSeq" id="WP_015916166.1">
    <property type="nucleotide sequence ID" value="NC_011989.1"/>
</dbReference>
<dbReference type="SMR" id="B9JWW7"/>
<dbReference type="STRING" id="311402.Avi_2445"/>
<dbReference type="KEGG" id="avi:Avi_2445"/>
<dbReference type="eggNOG" id="COG0669">
    <property type="taxonomic scope" value="Bacteria"/>
</dbReference>
<dbReference type="HOGENOM" id="CLU_100149_0_1_5"/>
<dbReference type="UniPathway" id="UPA00241">
    <property type="reaction ID" value="UER00355"/>
</dbReference>
<dbReference type="Proteomes" id="UP000001596">
    <property type="component" value="Chromosome 1"/>
</dbReference>
<dbReference type="GO" id="GO:0005737">
    <property type="term" value="C:cytoplasm"/>
    <property type="evidence" value="ECO:0007669"/>
    <property type="project" value="UniProtKB-SubCell"/>
</dbReference>
<dbReference type="GO" id="GO:0005524">
    <property type="term" value="F:ATP binding"/>
    <property type="evidence" value="ECO:0007669"/>
    <property type="project" value="UniProtKB-KW"/>
</dbReference>
<dbReference type="GO" id="GO:0004595">
    <property type="term" value="F:pantetheine-phosphate adenylyltransferase activity"/>
    <property type="evidence" value="ECO:0007669"/>
    <property type="project" value="UniProtKB-UniRule"/>
</dbReference>
<dbReference type="GO" id="GO:0015937">
    <property type="term" value="P:coenzyme A biosynthetic process"/>
    <property type="evidence" value="ECO:0007669"/>
    <property type="project" value="UniProtKB-UniRule"/>
</dbReference>
<dbReference type="CDD" id="cd02163">
    <property type="entry name" value="PPAT"/>
    <property type="match status" value="1"/>
</dbReference>
<dbReference type="Gene3D" id="3.40.50.620">
    <property type="entry name" value="HUPs"/>
    <property type="match status" value="1"/>
</dbReference>
<dbReference type="HAMAP" id="MF_00151">
    <property type="entry name" value="PPAT_bact"/>
    <property type="match status" value="1"/>
</dbReference>
<dbReference type="InterPro" id="IPR004821">
    <property type="entry name" value="Cyt_trans-like"/>
</dbReference>
<dbReference type="InterPro" id="IPR001980">
    <property type="entry name" value="PPAT"/>
</dbReference>
<dbReference type="InterPro" id="IPR014729">
    <property type="entry name" value="Rossmann-like_a/b/a_fold"/>
</dbReference>
<dbReference type="NCBIfam" id="TIGR01510">
    <property type="entry name" value="coaD_prev_kdtB"/>
    <property type="match status" value="1"/>
</dbReference>
<dbReference type="NCBIfam" id="TIGR00125">
    <property type="entry name" value="cyt_tran_rel"/>
    <property type="match status" value="1"/>
</dbReference>
<dbReference type="PANTHER" id="PTHR21342">
    <property type="entry name" value="PHOSPHOPANTETHEINE ADENYLYLTRANSFERASE"/>
    <property type="match status" value="1"/>
</dbReference>
<dbReference type="PANTHER" id="PTHR21342:SF1">
    <property type="entry name" value="PHOSPHOPANTETHEINE ADENYLYLTRANSFERASE"/>
    <property type="match status" value="1"/>
</dbReference>
<dbReference type="Pfam" id="PF01467">
    <property type="entry name" value="CTP_transf_like"/>
    <property type="match status" value="1"/>
</dbReference>
<dbReference type="PRINTS" id="PR01020">
    <property type="entry name" value="LPSBIOSNTHSS"/>
</dbReference>
<dbReference type="SUPFAM" id="SSF52374">
    <property type="entry name" value="Nucleotidylyl transferase"/>
    <property type="match status" value="1"/>
</dbReference>
<sequence>MTIAFYPGSFDPMTNGHLDVLVQALNVVPKVVVGIGIHPGKVPMFSFEERAELIATSLGEAVPLRAGDVSVIAFDGLAVDAARQHGATLLVRGLRDGSDLDYEMQLAGMNRQMAPDLQTVFLPAGTASRPITATLVRQIATMGGDVSAFVPPQVSRALKSRLKT</sequence>
<accession>B9JWW7</accession>
<comment type="function">
    <text evidence="1">Reversibly transfers an adenylyl group from ATP to 4'-phosphopantetheine, yielding dephospho-CoA (dPCoA) and pyrophosphate.</text>
</comment>
<comment type="catalytic activity">
    <reaction evidence="1">
        <text>(R)-4'-phosphopantetheine + ATP + H(+) = 3'-dephospho-CoA + diphosphate</text>
        <dbReference type="Rhea" id="RHEA:19801"/>
        <dbReference type="ChEBI" id="CHEBI:15378"/>
        <dbReference type="ChEBI" id="CHEBI:30616"/>
        <dbReference type="ChEBI" id="CHEBI:33019"/>
        <dbReference type="ChEBI" id="CHEBI:57328"/>
        <dbReference type="ChEBI" id="CHEBI:61723"/>
        <dbReference type="EC" id="2.7.7.3"/>
    </reaction>
</comment>
<comment type="cofactor">
    <cofactor evidence="1">
        <name>Mg(2+)</name>
        <dbReference type="ChEBI" id="CHEBI:18420"/>
    </cofactor>
</comment>
<comment type="pathway">
    <text evidence="1">Cofactor biosynthesis; coenzyme A biosynthesis; CoA from (R)-pantothenate: step 4/5.</text>
</comment>
<comment type="subunit">
    <text evidence="1">Homohexamer.</text>
</comment>
<comment type="subcellular location">
    <subcellularLocation>
        <location evidence="1">Cytoplasm</location>
    </subcellularLocation>
</comment>
<comment type="similarity">
    <text evidence="1">Belongs to the bacterial CoaD family.</text>
</comment>
<name>COAD_ALLAM</name>
<reference key="1">
    <citation type="journal article" date="2009" name="J. Bacteriol.">
        <title>Genome sequences of three Agrobacterium biovars help elucidate the evolution of multichromosome genomes in bacteria.</title>
        <authorList>
            <person name="Slater S.C."/>
            <person name="Goldman B.S."/>
            <person name="Goodner B."/>
            <person name="Setubal J.C."/>
            <person name="Farrand S.K."/>
            <person name="Nester E.W."/>
            <person name="Burr T.J."/>
            <person name="Banta L."/>
            <person name="Dickerman A.W."/>
            <person name="Paulsen I."/>
            <person name="Otten L."/>
            <person name="Suen G."/>
            <person name="Welch R."/>
            <person name="Almeida N.F."/>
            <person name="Arnold F."/>
            <person name="Burton O.T."/>
            <person name="Du Z."/>
            <person name="Ewing A."/>
            <person name="Godsy E."/>
            <person name="Heisel S."/>
            <person name="Houmiel K.L."/>
            <person name="Jhaveri J."/>
            <person name="Lu J."/>
            <person name="Miller N.M."/>
            <person name="Norton S."/>
            <person name="Chen Q."/>
            <person name="Phoolcharoen W."/>
            <person name="Ohlin V."/>
            <person name="Ondrusek D."/>
            <person name="Pride N."/>
            <person name="Stricklin S.L."/>
            <person name="Sun J."/>
            <person name="Wheeler C."/>
            <person name="Wilson L."/>
            <person name="Zhu H."/>
            <person name="Wood D.W."/>
        </authorList>
    </citation>
    <scope>NUCLEOTIDE SEQUENCE [LARGE SCALE GENOMIC DNA]</scope>
    <source>
        <strain>ATCC BAA-846 / DSM 112012 / S4</strain>
    </source>
</reference>
<protein>
    <recommendedName>
        <fullName evidence="1">Phosphopantetheine adenylyltransferase</fullName>
        <ecNumber evidence="1">2.7.7.3</ecNumber>
    </recommendedName>
    <alternativeName>
        <fullName evidence="1">Dephospho-CoA pyrophosphorylase</fullName>
    </alternativeName>
    <alternativeName>
        <fullName evidence="1">Pantetheine-phosphate adenylyltransferase</fullName>
        <shortName evidence="1">PPAT</shortName>
    </alternativeName>
</protein>
<proteinExistence type="inferred from homology"/>
<gene>
    <name evidence="1" type="primary">coaD</name>
    <name type="ordered locus">Avi_2445</name>
</gene>
<keyword id="KW-0067">ATP-binding</keyword>
<keyword id="KW-0173">Coenzyme A biosynthesis</keyword>
<keyword id="KW-0963">Cytoplasm</keyword>
<keyword id="KW-0460">Magnesium</keyword>
<keyword id="KW-0547">Nucleotide-binding</keyword>
<keyword id="KW-0548">Nucleotidyltransferase</keyword>
<keyword id="KW-1185">Reference proteome</keyword>
<keyword id="KW-0808">Transferase</keyword>
<evidence type="ECO:0000255" key="1">
    <source>
        <dbReference type="HAMAP-Rule" id="MF_00151"/>
    </source>
</evidence>
<organism>
    <name type="scientific">Allorhizobium ampelinum (strain ATCC BAA-846 / DSM 112012 / S4)</name>
    <name type="common">Agrobacterium vitis (strain S4)</name>
    <dbReference type="NCBI Taxonomy" id="311402"/>
    <lineage>
        <taxon>Bacteria</taxon>
        <taxon>Pseudomonadati</taxon>
        <taxon>Pseudomonadota</taxon>
        <taxon>Alphaproteobacteria</taxon>
        <taxon>Hyphomicrobiales</taxon>
        <taxon>Rhizobiaceae</taxon>
        <taxon>Rhizobium/Agrobacterium group</taxon>
        <taxon>Allorhizobium</taxon>
        <taxon>Allorhizobium ampelinum</taxon>
    </lineage>
</organism>